<dbReference type="EC" id="2.1.1.177" evidence="1"/>
<dbReference type="EMBL" id="CP000813">
    <property type="protein sequence ID" value="ABV64320.1"/>
    <property type="molecule type" value="Genomic_DNA"/>
</dbReference>
<dbReference type="RefSeq" id="WP_012011868.1">
    <property type="nucleotide sequence ID" value="NZ_VEIA01000011.1"/>
</dbReference>
<dbReference type="SMR" id="A8FJA3"/>
<dbReference type="STRING" id="315750.BPUM_3676"/>
<dbReference type="GeneID" id="5622965"/>
<dbReference type="KEGG" id="bpu:BPUM_3676"/>
<dbReference type="eggNOG" id="COG1576">
    <property type="taxonomic scope" value="Bacteria"/>
</dbReference>
<dbReference type="HOGENOM" id="CLU_100552_0_0_9"/>
<dbReference type="OrthoDB" id="9806643at2"/>
<dbReference type="Proteomes" id="UP000001355">
    <property type="component" value="Chromosome"/>
</dbReference>
<dbReference type="GO" id="GO:0005737">
    <property type="term" value="C:cytoplasm"/>
    <property type="evidence" value="ECO:0007669"/>
    <property type="project" value="UniProtKB-SubCell"/>
</dbReference>
<dbReference type="GO" id="GO:0070038">
    <property type="term" value="F:rRNA (pseudouridine-N3-)-methyltransferase activity"/>
    <property type="evidence" value="ECO:0007669"/>
    <property type="project" value="UniProtKB-UniRule"/>
</dbReference>
<dbReference type="CDD" id="cd18081">
    <property type="entry name" value="RlmH-like"/>
    <property type="match status" value="1"/>
</dbReference>
<dbReference type="Gene3D" id="3.40.1280.10">
    <property type="match status" value="1"/>
</dbReference>
<dbReference type="HAMAP" id="MF_00658">
    <property type="entry name" value="23SrRNA_methyltr_H"/>
    <property type="match status" value="1"/>
</dbReference>
<dbReference type="InterPro" id="IPR029028">
    <property type="entry name" value="Alpha/beta_knot_MTases"/>
</dbReference>
<dbReference type="InterPro" id="IPR003742">
    <property type="entry name" value="RlmH-like"/>
</dbReference>
<dbReference type="InterPro" id="IPR029026">
    <property type="entry name" value="tRNA_m1G_MTases_N"/>
</dbReference>
<dbReference type="NCBIfam" id="NF000985">
    <property type="entry name" value="PRK00103.1-3"/>
    <property type="match status" value="1"/>
</dbReference>
<dbReference type="NCBIfam" id="TIGR00246">
    <property type="entry name" value="tRNA_RlmH_YbeA"/>
    <property type="match status" value="1"/>
</dbReference>
<dbReference type="PANTHER" id="PTHR33603">
    <property type="entry name" value="METHYLTRANSFERASE"/>
    <property type="match status" value="1"/>
</dbReference>
<dbReference type="PANTHER" id="PTHR33603:SF1">
    <property type="entry name" value="RIBOSOMAL RNA LARGE SUBUNIT METHYLTRANSFERASE H"/>
    <property type="match status" value="1"/>
</dbReference>
<dbReference type="Pfam" id="PF02590">
    <property type="entry name" value="SPOUT_MTase"/>
    <property type="match status" value="1"/>
</dbReference>
<dbReference type="PIRSF" id="PIRSF004505">
    <property type="entry name" value="MT_bac"/>
    <property type="match status" value="1"/>
</dbReference>
<dbReference type="SUPFAM" id="SSF75217">
    <property type="entry name" value="alpha/beta knot"/>
    <property type="match status" value="1"/>
</dbReference>
<comment type="function">
    <text evidence="1">Specifically methylates the pseudouridine at position 1915 (m3Psi1915) in 23S rRNA.</text>
</comment>
<comment type="catalytic activity">
    <reaction evidence="1">
        <text>pseudouridine(1915) in 23S rRNA + S-adenosyl-L-methionine = N(3)-methylpseudouridine(1915) in 23S rRNA + S-adenosyl-L-homocysteine + H(+)</text>
        <dbReference type="Rhea" id="RHEA:42752"/>
        <dbReference type="Rhea" id="RHEA-COMP:10221"/>
        <dbReference type="Rhea" id="RHEA-COMP:10222"/>
        <dbReference type="ChEBI" id="CHEBI:15378"/>
        <dbReference type="ChEBI" id="CHEBI:57856"/>
        <dbReference type="ChEBI" id="CHEBI:59789"/>
        <dbReference type="ChEBI" id="CHEBI:65314"/>
        <dbReference type="ChEBI" id="CHEBI:74486"/>
        <dbReference type="EC" id="2.1.1.177"/>
    </reaction>
</comment>
<comment type="subunit">
    <text evidence="1">Homodimer.</text>
</comment>
<comment type="subcellular location">
    <subcellularLocation>
        <location evidence="1">Cytoplasm</location>
    </subcellularLocation>
</comment>
<comment type="similarity">
    <text evidence="1">Belongs to the RNA methyltransferase RlmH family.</text>
</comment>
<sequence length="159" mass="18037">MNISIITVGKLKEKYLKQGIAEYTKRLQAYAKIDIIELADEKAPEHLSEQDMKIIKDKEGERILSKINPDAHVIALAIEGKMKTSEELADTIDKLATYGKSKVCFVIGGSLGLSDAVMQRANEKLSFSRMTFPHQLMRLVLVEQVYRAFRIVRGEPYHK</sequence>
<feature type="chain" id="PRO_1000061757" description="Ribosomal RNA large subunit methyltransferase H">
    <location>
        <begin position="1"/>
        <end position="159"/>
    </location>
</feature>
<feature type="binding site" evidence="1">
    <location>
        <position position="76"/>
    </location>
    <ligand>
        <name>S-adenosyl-L-methionine</name>
        <dbReference type="ChEBI" id="CHEBI:59789"/>
    </ligand>
</feature>
<feature type="binding site" evidence="1">
    <location>
        <position position="108"/>
    </location>
    <ligand>
        <name>S-adenosyl-L-methionine</name>
        <dbReference type="ChEBI" id="CHEBI:59789"/>
    </ligand>
</feature>
<feature type="binding site" evidence="1">
    <location>
        <begin position="127"/>
        <end position="132"/>
    </location>
    <ligand>
        <name>S-adenosyl-L-methionine</name>
        <dbReference type="ChEBI" id="CHEBI:59789"/>
    </ligand>
</feature>
<organism>
    <name type="scientific">Bacillus pumilus (strain SAFR-032)</name>
    <dbReference type="NCBI Taxonomy" id="315750"/>
    <lineage>
        <taxon>Bacteria</taxon>
        <taxon>Bacillati</taxon>
        <taxon>Bacillota</taxon>
        <taxon>Bacilli</taxon>
        <taxon>Bacillales</taxon>
        <taxon>Bacillaceae</taxon>
        <taxon>Bacillus</taxon>
    </lineage>
</organism>
<evidence type="ECO:0000255" key="1">
    <source>
        <dbReference type="HAMAP-Rule" id="MF_00658"/>
    </source>
</evidence>
<accession>A8FJA3</accession>
<proteinExistence type="inferred from homology"/>
<name>RLMH_BACP2</name>
<protein>
    <recommendedName>
        <fullName evidence="1">Ribosomal RNA large subunit methyltransferase H</fullName>
        <ecNumber evidence="1">2.1.1.177</ecNumber>
    </recommendedName>
    <alternativeName>
        <fullName evidence="1">23S rRNA (pseudouridine1915-N3)-methyltransferase</fullName>
    </alternativeName>
    <alternativeName>
        <fullName evidence="1">23S rRNA m3Psi1915 methyltransferase</fullName>
    </alternativeName>
    <alternativeName>
        <fullName evidence="1">rRNA (pseudouridine-N3-)-methyltransferase RlmH</fullName>
    </alternativeName>
</protein>
<gene>
    <name evidence="1" type="primary">rlmH</name>
    <name type="ordered locus">BPUM_3676</name>
</gene>
<reference key="1">
    <citation type="journal article" date="2007" name="PLoS ONE">
        <title>Paradoxical DNA repair and peroxide resistance gene conservation in Bacillus pumilus SAFR-032.</title>
        <authorList>
            <person name="Gioia J."/>
            <person name="Yerrapragada S."/>
            <person name="Qin X."/>
            <person name="Jiang H."/>
            <person name="Igboeli O.C."/>
            <person name="Muzny D."/>
            <person name="Dugan-Rocha S."/>
            <person name="Ding Y."/>
            <person name="Hawes A."/>
            <person name="Liu W."/>
            <person name="Perez L."/>
            <person name="Kovar C."/>
            <person name="Dinh H."/>
            <person name="Lee S."/>
            <person name="Nazareth L."/>
            <person name="Blyth P."/>
            <person name="Holder M."/>
            <person name="Buhay C."/>
            <person name="Tirumalai M.R."/>
            <person name="Liu Y."/>
            <person name="Dasgupta I."/>
            <person name="Bokhetache L."/>
            <person name="Fujita M."/>
            <person name="Karouia F."/>
            <person name="Eswara Moorthy P."/>
            <person name="Siefert J."/>
            <person name="Uzman A."/>
            <person name="Buzumbo P."/>
            <person name="Verma A."/>
            <person name="Zwiya H."/>
            <person name="McWilliams B.D."/>
            <person name="Olowu A."/>
            <person name="Clinkenbeard K.D."/>
            <person name="Newcombe D."/>
            <person name="Golebiewski L."/>
            <person name="Petrosino J.F."/>
            <person name="Nicholson W.L."/>
            <person name="Fox G.E."/>
            <person name="Venkateswaran K."/>
            <person name="Highlander S.K."/>
            <person name="Weinstock G.M."/>
        </authorList>
    </citation>
    <scope>NUCLEOTIDE SEQUENCE [LARGE SCALE GENOMIC DNA]</scope>
    <source>
        <strain>SAFR-032</strain>
    </source>
</reference>
<keyword id="KW-0963">Cytoplasm</keyword>
<keyword id="KW-0489">Methyltransferase</keyword>
<keyword id="KW-0698">rRNA processing</keyword>
<keyword id="KW-0949">S-adenosyl-L-methionine</keyword>
<keyword id="KW-0808">Transferase</keyword>